<feature type="chain" id="PRO_1000190094" description="Thiosulfate sulfurtransferase GlpE">
    <location>
        <begin position="1"/>
        <end position="108"/>
    </location>
</feature>
<feature type="domain" description="Rhodanese" evidence="1">
    <location>
        <begin position="18"/>
        <end position="106"/>
    </location>
</feature>
<feature type="active site" description="Cysteine persulfide intermediate" evidence="1">
    <location>
        <position position="66"/>
    </location>
</feature>
<dbReference type="EC" id="2.8.1.1" evidence="1"/>
<dbReference type="EMBL" id="CP000687">
    <property type="protein sequence ID" value="ABY68685.1"/>
    <property type="molecule type" value="Genomic_DNA"/>
</dbReference>
<dbReference type="RefSeq" id="WP_012262689.1">
    <property type="nucleotide sequence ID" value="NC_010278.1"/>
</dbReference>
<dbReference type="SMR" id="B0BRY5"/>
<dbReference type="KEGG" id="apj:APJL_0079"/>
<dbReference type="HOGENOM" id="CLU_089574_14_0_6"/>
<dbReference type="Proteomes" id="UP000008547">
    <property type="component" value="Chromosome"/>
</dbReference>
<dbReference type="GO" id="GO:0005737">
    <property type="term" value="C:cytoplasm"/>
    <property type="evidence" value="ECO:0007669"/>
    <property type="project" value="UniProtKB-SubCell"/>
</dbReference>
<dbReference type="GO" id="GO:0004792">
    <property type="term" value="F:thiosulfate-cyanide sulfurtransferase activity"/>
    <property type="evidence" value="ECO:0007669"/>
    <property type="project" value="UniProtKB-UniRule"/>
</dbReference>
<dbReference type="GO" id="GO:0006071">
    <property type="term" value="P:glycerol metabolic process"/>
    <property type="evidence" value="ECO:0007669"/>
    <property type="project" value="UniProtKB-UniRule"/>
</dbReference>
<dbReference type="CDD" id="cd01444">
    <property type="entry name" value="GlpE_ST"/>
    <property type="match status" value="1"/>
</dbReference>
<dbReference type="Gene3D" id="3.40.250.10">
    <property type="entry name" value="Rhodanese-like domain"/>
    <property type="match status" value="1"/>
</dbReference>
<dbReference type="HAMAP" id="MF_01009">
    <property type="entry name" value="Thiosulf_sulfurtr"/>
    <property type="match status" value="1"/>
</dbReference>
<dbReference type="InterPro" id="IPR050229">
    <property type="entry name" value="GlpE_sulfurtransferase"/>
</dbReference>
<dbReference type="InterPro" id="IPR001763">
    <property type="entry name" value="Rhodanese-like_dom"/>
</dbReference>
<dbReference type="InterPro" id="IPR036873">
    <property type="entry name" value="Rhodanese-like_dom_sf"/>
</dbReference>
<dbReference type="InterPro" id="IPR023695">
    <property type="entry name" value="Thiosulf_sulfurTrfase"/>
</dbReference>
<dbReference type="NCBIfam" id="NF001195">
    <property type="entry name" value="PRK00162.1"/>
    <property type="match status" value="1"/>
</dbReference>
<dbReference type="PANTHER" id="PTHR43031">
    <property type="entry name" value="FAD-DEPENDENT OXIDOREDUCTASE"/>
    <property type="match status" value="1"/>
</dbReference>
<dbReference type="PANTHER" id="PTHR43031:SF6">
    <property type="entry name" value="THIOSULFATE SULFURTRANSFERASE GLPE"/>
    <property type="match status" value="1"/>
</dbReference>
<dbReference type="Pfam" id="PF00581">
    <property type="entry name" value="Rhodanese"/>
    <property type="match status" value="1"/>
</dbReference>
<dbReference type="SMART" id="SM00450">
    <property type="entry name" value="RHOD"/>
    <property type="match status" value="1"/>
</dbReference>
<dbReference type="SUPFAM" id="SSF52821">
    <property type="entry name" value="Rhodanese/Cell cycle control phosphatase"/>
    <property type="match status" value="1"/>
</dbReference>
<dbReference type="PROSITE" id="PS50206">
    <property type="entry name" value="RHODANESE_3"/>
    <property type="match status" value="1"/>
</dbReference>
<organism>
    <name type="scientific">Actinobacillus pleuropneumoniae serotype 3 (strain JL03)</name>
    <dbReference type="NCBI Taxonomy" id="434271"/>
    <lineage>
        <taxon>Bacteria</taxon>
        <taxon>Pseudomonadati</taxon>
        <taxon>Pseudomonadota</taxon>
        <taxon>Gammaproteobacteria</taxon>
        <taxon>Pasteurellales</taxon>
        <taxon>Pasteurellaceae</taxon>
        <taxon>Actinobacillus</taxon>
    </lineage>
</organism>
<name>GLPE_ACTPJ</name>
<sequence>MSETFTEISPHQAWELIENEGATLADIRDGRRYAYSHPQDAFHLTNESYGRFLDEVDYEEPVIVICYHGVSSRNTAQFLVEQGFDRVYSVKGGFDGWERSGLPIETAY</sequence>
<reference key="1">
    <citation type="journal article" date="2008" name="PLoS ONE">
        <title>Genome biology of Actinobacillus pleuropneumoniae JL03, an isolate of serotype 3 prevalent in China.</title>
        <authorList>
            <person name="Xu Z."/>
            <person name="Zhou Y."/>
            <person name="Li L."/>
            <person name="Zhou R."/>
            <person name="Xiao S."/>
            <person name="Wan Y."/>
            <person name="Zhang S."/>
            <person name="Wang K."/>
            <person name="Li W."/>
            <person name="Li L."/>
            <person name="Jin H."/>
            <person name="Kang M."/>
            <person name="Dalai B."/>
            <person name="Li T."/>
            <person name="Liu L."/>
            <person name="Cheng Y."/>
            <person name="Zhang L."/>
            <person name="Xu T."/>
            <person name="Zheng H."/>
            <person name="Pu S."/>
            <person name="Wang B."/>
            <person name="Gu W."/>
            <person name="Zhang X.L."/>
            <person name="Zhu G.-F."/>
            <person name="Wang S."/>
            <person name="Zhao G.-P."/>
            <person name="Chen H."/>
        </authorList>
    </citation>
    <scope>NUCLEOTIDE SEQUENCE [LARGE SCALE GENOMIC DNA]</scope>
    <source>
        <strain>JL03</strain>
    </source>
</reference>
<keyword id="KW-0963">Cytoplasm</keyword>
<keyword id="KW-0808">Transferase</keyword>
<evidence type="ECO:0000255" key="1">
    <source>
        <dbReference type="HAMAP-Rule" id="MF_01009"/>
    </source>
</evidence>
<comment type="function">
    <text evidence="1">Transferase that catalyzes the transfer of sulfur from thiosulfate to thiophilic acceptors such as cyanide or dithiols. May function in a CysM-independent thiosulfate assimilation pathway by catalyzing the conversion of thiosulfate to sulfite, which can then be used for L-cysteine biosynthesis.</text>
</comment>
<comment type="catalytic activity">
    <reaction evidence="1">
        <text>thiosulfate + hydrogen cyanide = thiocyanate + sulfite + 2 H(+)</text>
        <dbReference type="Rhea" id="RHEA:16881"/>
        <dbReference type="ChEBI" id="CHEBI:15378"/>
        <dbReference type="ChEBI" id="CHEBI:17359"/>
        <dbReference type="ChEBI" id="CHEBI:18022"/>
        <dbReference type="ChEBI" id="CHEBI:18407"/>
        <dbReference type="ChEBI" id="CHEBI:33542"/>
        <dbReference type="EC" id="2.8.1.1"/>
    </reaction>
</comment>
<comment type="catalytic activity">
    <reaction evidence="1">
        <text>thiosulfate + [thioredoxin]-dithiol = [thioredoxin]-disulfide + hydrogen sulfide + sulfite + 2 H(+)</text>
        <dbReference type="Rhea" id="RHEA:83859"/>
        <dbReference type="Rhea" id="RHEA-COMP:10698"/>
        <dbReference type="Rhea" id="RHEA-COMP:10700"/>
        <dbReference type="ChEBI" id="CHEBI:15378"/>
        <dbReference type="ChEBI" id="CHEBI:17359"/>
        <dbReference type="ChEBI" id="CHEBI:29919"/>
        <dbReference type="ChEBI" id="CHEBI:29950"/>
        <dbReference type="ChEBI" id="CHEBI:33542"/>
        <dbReference type="ChEBI" id="CHEBI:50058"/>
    </reaction>
</comment>
<comment type="subcellular location">
    <subcellularLocation>
        <location evidence="1">Cytoplasm</location>
    </subcellularLocation>
</comment>
<comment type="similarity">
    <text evidence="1">Belongs to the GlpE family.</text>
</comment>
<protein>
    <recommendedName>
        <fullName evidence="1">Thiosulfate sulfurtransferase GlpE</fullName>
        <ecNumber evidence="1">2.8.1.1</ecNumber>
    </recommendedName>
</protein>
<proteinExistence type="inferred from homology"/>
<gene>
    <name evidence="1" type="primary">glpE</name>
    <name type="ordered locus">APJL_0079</name>
</gene>
<accession>B0BRY5</accession>